<reference key="1">
    <citation type="submission" date="2009-03" db="EMBL/GenBank/DDBJ databases">
        <title>Brucella melitensis ATCC 23457 whole genome shotgun sequencing project.</title>
        <authorList>
            <person name="Setubal J.C."/>
            <person name="Boyle S."/>
            <person name="Crasta O.R."/>
            <person name="Gillespie J.J."/>
            <person name="Kenyon R.W."/>
            <person name="Lu J."/>
            <person name="Mane S."/>
            <person name="Nagrani S."/>
            <person name="Shallom J.M."/>
            <person name="Shallom S."/>
            <person name="Shukla M."/>
            <person name="Snyder E.E."/>
            <person name="Sobral B.W."/>
            <person name="Wattam A.R."/>
            <person name="Will R."/>
            <person name="Williams K."/>
            <person name="Yoo H."/>
            <person name="Munk C."/>
            <person name="Tapia R."/>
            <person name="Han C."/>
            <person name="Detter J.C."/>
            <person name="Bruce D."/>
            <person name="Brettin T.S."/>
        </authorList>
    </citation>
    <scope>NUCLEOTIDE SEQUENCE [LARGE SCALE GENOMIC DNA]</scope>
    <source>
        <strain>ATCC 23457</strain>
    </source>
</reference>
<proteinExistence type="inferred from homology"/>
<evidence type="ECO:0000255" key="1">
    <source>
        <dbReference type="HAMAP-Rule" id="MF_00235"/>
    </source>
</evidence>
<sequence>MRLILLGPPGAGKGTQAGLLTKKHGIPQLSTGDMLRAAVAQQSEIGKRAKAVMDAGQLVSDEIVNQIVSERIDAPDCANGFILDGYPRTVPQAQALSQMLSGKGLKLDAVIELKVDENALVKRMESRVAETIAKGGQVRSDDNPEAFRKRLVEYREKTAPLSSYYAGTGELRIINGMAPVEEVTAEIERILVPA</sequence>
<organism>
    <name type="scientific">Brucella melitensis biotype 2 (strain ATCC 23457)</name>
    <dbReference type="NCBI Taxonomy" id="546272"/>
    <lineage>
        <taxon>Bacteria</taxon>
        <taxon>Pseudomonadati</taxon>
        <taxon>Pseudomonadota</taxon>
        <taxon>Alphaproteobacteria</taxon>
        <taxon>Hyphomicrobiales</taxon>
        <taxon>Brucellaceae</taxon>
        <taxon>Brucella/Ochrobactrum group</taxon>
        <taxon>Brucella</taxon>
    </lineage>
</organism>
<feature type="chain" id="PRO_1000191127" description="Adenylate kinase">
    <location>
        <begin position="1"/>
        <end position="194"/>
    </location>
</feature>
<feature type="region of interest" description="NMP" evidence="1">
    <location>
        <begin position="30"/>
        <end position="59"/>
    </location>
</feature>
<feature type="region of interest" description="LID" evidence="1">
    <location>
        <begin position="126"/>
        <end position="142"/>
    </location>
</feature>
<feature type="binding site" evidence="1">
    <location>
        <begin position="10"/>
        <end position="15"/>
    </location>
    <ligand>
        <name>ATP</name>
        <dbReference type="ChEBI" id="CHEBI:30616"/>
    </ligand>
</feature>
<feature type="binding site" evidence="1">
    <location>
        <position position="31"/>
    </location>
    <ligand>
        <name>AMP</name>
        <dbReference type="ChEBI" id="CHEBI:456215"/>
    </ligand>
</feature>
<feature type="binding site" evidence="1">
    <location>
        <position position="36"/>
    </location>
    <ligand>
        <name>AMP</name>
        <dbReference type="ChEBI" id="CHEBI:456215"/>
    </ligand>
</feature>
<feature type="binding site" evidence="1">
    <location>
        <begin position="57"/>
        <end position="59"/>
    </location>
    <ligand>
        <name>AMP</name>
        <dbReference type="ChEBI" id="CHEBI:456215"/>
    </ligand>
</feature>
<feature type="binding site" evidence="1">
    <location>
        <begin position="85"/>
        <end position="88"/>
    </location>
    <ligand>
        <name>AMP</name>
        <dbReference type="ChEBI" id="CHEBI:456215"/>
    </ligand>
</feature>
<feature type="binding site" evidence="1">
    <location>
        <position position="92"/>
    </location>
    <ligand>
        <name>AMP</name>
        <dbReference type="ChEBI" id="CHEBI:456215"/>
    </ligand>
</feature>
<feature type="binding site" evidence="1">
    <location>
        <position position="127"/>
    </location>
    <ligand>
        <name>ATP</name>
        <dbReference type="ChEBI" id="CHEBI:30616"/>
    </ligand>
</feature>
<feature type="binding site" evidence="1">
    <location>
        <position position="139"/>
    </location>
    <ligand>
        <name>AMP</name>
        <dbReference type="ChEBI" id="CHEBI:456215"/>
    </ligand>
</feature>
<feature type="binding site" evidence="1">
    <location>
        <position position="150"/>
    </location>
    <ligand>
        <name>AMP</name>
        <dbReference type="ChEBI" id="CHEBI:456215"/>
    </ligand>
</feature>
<feature type="binding site" evidence="1">
    <location>
        <position position="178"/>
    </location>
    <ligand>
        <name>ATP</name>
        <dbReference type="ChEBI" id="CHEBI:30616"/>
    </ligand>
</feature>
<keyword id="KW-0067">ATP-binding</keyword>
<keyword id="KW-0963">Cytoplasm</keyword>
<keyword id="KW-0418">Kinase</keyword>
<keyword id="KW-0545">Nucleotide biosynthesis</keyword>
<keyword id="KW-0547">Nucleotide-binding</keyword>
<keyword id="KW-0808">Transferase</keyword>
<protein>
    <recommendedName>
        <fullName evidence="1">Adenylate kinase</fullName>
        <shortName evidence="1">AK</shortName>
        <ecNumber evidence="1">2.7.4.3</ecNumber>
    </recommendedName>
    <alternativeName>
        <fullName evidence="1">ATP-AMP transphosphorylase</fullName>
    </alternativeName>
    <alternativeName>
        <fullName evidence="1">ATP:AMP phosphotransferase</fullName>
    </alternativeName>
    <alternativeName>
        <fullName evidence="1">Adenylate monophosphate kinase</fullName>
    </alternativeName>
</protein>
<gene>
    <name evidence="1" type="primary">adk</name>
    <name type="ordered locus">BMEA_A1257</name>
</gene>
<comment type="function">
    <text evidence="1">Catalyzes the reversible transfer of the terminal phosphate group between ATP and AMP. Plays an important role in cellular energy homeostasis and in adenine nucleotide metabolism.</text>
</comment>
<comment type="catalytic activity">
    <reaction evidence="1">
        <text>AMP + ATP = 2 ADP</text>
        <dbReference type="Rhea" id="RHEA:12973"/>
        <dbReference type="ChEBI" id="CHEBI:30616"/>
        <dbReference type="ChEBI" id="CHEBI:456215"/>
        <dbReference type="ChEBI" id="CHEBI:456216"/>
        <dbReference type="EC" id="2.7.4.3"/>
    </reaction>
</comment>
<comment type="pathway">
    <text evidence="1">Purine metabolism; AMP biosynthesis via salvage pathway; AMP from ADP: step 1/1.</text>
</comment>
<comment type="subunit">
    <text evidence="1">Monomer.</text>
</comment>
<comment type="subcellular location">
    <subcellularLocation>
        <location evidence="1">Cytoplasm</location>
    </subcellularLocation>
</comment>
<comment type="domain">
    <text evidence="1">Consists of three domains, a large central CORE domain and two small peripheral domains, NMPbind and LID, which undergo movements during catalysis. The LID domain closes over the site of phosphoryl transfer upon ATP binding. Assembling and dissambling the active center during each catalytic cycle provides an effective means to prevent ATP hydrolysis.</text>
</comment>
<comment type="similarity">
    <text evidence="1">Belongs to the adenylate kinase family.</text>
</comment>
<name>KAD_BRUMB</name>
<accession>C0RJI0</accession>
<dbReference type="EC" id="2.7.4.3" evidence="1"/>
<dbReference type="EMBL" id="CP001488">
    <property type="protein sequence ID" value="ACO00988.1"/>
    <property type="molecule type" value="Genomic_DNA"/>
</dbReference>
<dbReference type="RefSeq" id="WP_002964341.1">
    <property type="nucleotide sequence ID" value="NC_012441.1"/>
</dbReference>
<dbReference type="SMR" id="C0RJI0"/>
<dbReference type="KEGG" id="bmi:BMEA_A1257"/>
<dbReference type="HOGENOM" id="CLU_032354_4_1_5"/>
<dbReference type="UniPathway" id="UPA00588">
    <property type="reaction ID" value="UER00649"/>
</dbReference>
<dbReference type="Proteomes" id="UP000001748">
    <property type="component" value="Chromosome I"/>
</dbReference>
<dbReference type="GO" id="GO:0005737">
    <property type="term" value="C:cytoplasm"/>
    <property type="evidence" value="ECO:0007669"/>
    <property type="project" value="UniProtKB-SubCell"/>
</dbReference>
<dbReference type="GO" id="GO:0004017">
    <property type="term" value="F:adenylate kinase activity"/>
    <property type="evidence" value="ECO:0007669"/>
    <property type="project" value="UniProtKB-UniRule"/>
</dbReference>
<dbReference type="GO" id="GO:0005524">
    <property type="term" value="F:ATP binding"/>
    <property type="evidence" value="ECO:0007669"/>
    <property type="project" value="UniProtKB-UniRule"/>
</dbReference>
<dbReference type="GO" id="GO:0044209">
    <property type="term" value="P:AMP salvage"/>
    <property type="evidence" value="ECO:0007669"/>
    <property type="project" value="UniProtKB-UniRule"/>
</dbReference>
<dbReference type="CDD" id="cd01428">
    <property type="entry name" value="ADK"/>
    <property type="match status" value="1"/>
</dbReference>
<dbReference type="Gene3D" id="3.40.50.300">
    <property type="entry name" value="P-loop containing nucleotide triphosphate hydrolases"/>
    <property type="match status" value="1"/>
</dbReference>
<dbReference type="HAMAP" id="MF_00235">
    <property type="entry name" value="Adenylate_kinase_Adk"/>
    <property type="match status" value="1"/>
</dbReference>
<dbReference type="InterPro" id="IPR006259">
    <property type="entry name" value="Adenyl_kin_sub"/>
</dbReference>
<dbReference type="InterPro" id="IPR000850">
    <property type="entry name" value="Adenylat/UMP-CMP_kin"/>
</dbReference>
<dbReference type="InterPro" id="IPR033690">
    <property type="entry name" value="Adenylat_kinase_CS"/>
</dbReference>
<dbReference type="InterPro" id="IPR027417">
    <property type="entry name" value="P-loop_NTPase"/>
</dbReference>
<dbReference type="NCBIfam" id="TIGR01351">
    <property type="entry name" value="adk"/>
    <property type="match status" value="1"/>
</dbReference>
<dbReference type="NCBIfam" id="NF001381">
    <property type="entry name" value="PRK00279.1-3"/>
    <property type="match status" value="1"/>
</dbReference>
<dbReference type="NCBIfam" id="NF011100">
    <property type="entry name" value="PRK14527.1"/>
    <property type="match status" value="1"/>
</dbReference>
<dbReference type="NCBIfam" id="NF011101">
    <property type="entry name" value="PRK14528.1"/>
    <property type="match status" value="1"/>
</dbReference>
<dbReference type="NCBIfam" id="NF011104">
    <property type="entry name" value="PRK14531.1"/>
    <property type="match status" value="1"/>
</dbReference>
<dbReference type="NCBIfam" id="NF011105">
    <property type="entry name" value="PRK14532.1"/>
    <property type="match status" value="1"/>
</dbReference>
<dbReference type="PANTHER" id="PTHR23359">
    <property type="entry name" value="NUCLEOTIDE KINASE"/>
    <property type="match status" value="1"/>
</dbReference>
<dbReference type="Pfam" id="PF00406">
    <property type="entry name" value="ADK"/>
    <property type="match status" value="1"/>
</dbReference>
<dbReference type="PRINTS" id="PR00094">
    <property type="entry name" value="ADENYLTKNASE"/>
</dbReference>
<dbReference type="SUPFAM" id="SSF52540">
    <property type="entry name" value="P-loop containing nucleoside triphosphate hydrolases"/>
    <property type="match status" value="1"/>
</dbReference>
<dbReference type="PROSITE" id="PS00113">
    <property type="entry name" value="ADENYLATE_KINASE"/>
    <property type="match status" value="1"/>
</dbReference>